<accession>Q7M8G1</accession>
<organism>
    <name type="scientific">Wolinella succinogenes (strain ATCC 29543 / DSM 1740 / CCUG 13145 / JCM 31913 / LMG 7466 / NCTC 11488 / FDC 602W)</name>
    <name type="common">Vibrio succinogenes</name>
    <dbReference type="NCBI Taxonomy" id="273121"/>
    <lineage>
        <taxon>Bacteria</taxon>
        <taxon>Pseudomonadati</taxon>
        <taxon>Campylobacterota</taxon>
        <taxon>Epsilonproteobacteria</taxon>
        <taxon>Campylobacterales</taxon>
        <taxon>Helicobacteraceae</taxon>
        <taxon>Wolinella</taxon>
    </lineage>
</organism>
<feature type="chain" id="PRO_0000111854" description="5'-nucleotidase SurE">
    <location>
        <begin position="1"/>
        <end position="259"/>
    </location>
</feature>
<feature type="binding site" evidence="1">
    <location>
        <position position="10"/>
    </location>
    <ligand>
        <name>a divalent metal cation</name>
        <dbReference type="ChEBI" id="CHEBI:60240"/>
    </ligand>
</feature>
<feature type="binding site" evidence="1">
    <location>
        <position position="11"/>
    </location>
    <ligand>
        <name>a divalent metal cation</name>
        <dbReference type="ChEBI" id="CHEBI:60240"/>
    </ligand>
</feature>
<feature type="binding site" evidence="1">
    <location>
        <position position="41"/>
    </location>
    <ligand>
        <name>a divalent metal cation</name>
        <dbReference type="ChEBI" id="CHEBI:60240"/>
    </ligand>
</feature>
<feature type="binding site" evidence="1">
    <location>
        <position position="96"/>
    </location>
    <ligand>
        <name>a divalent metal cation</name>
        <dbReference type="ChEBI" id="CHEBI:60240"/>
    </ligand>
</feature>
<keyword id="KW-0963">Cytoplasm</keyword>
<keyword id="KW-0378">Hydrolase</keyword>
<keyword id="KW-0479">Metal-binding</keyword>
<keyword id="KW-0547">Nucleotide-binding</keyword>
<keyword id="KW-1185">Reference proteome</keyword>
<sequence>MLKRILITNDDGFDSPGLLALKEALCDVAHLTVVAPANEKSACGHGLTLTSPLRFIKLDDDVYKLRDGTPTDCIYLALNALYEEHSKPDLIISGINLGSNMGEDITYSGTASGAMEGVIHGIPSVAFSQLLHDKNTFGFDFALAKKVVRELTLKILSGGFPLGDRKFLNVNIPYVGIEEFKGYKVTEMGYRLYGNDAHLHRNPRGEEHYWLGLHPLAWNERNNARESDFKVATEGYVSITPIKLDLTSYEDIKELEAWI</sequence>
<name>SURE_WOLSU</name>
<evidence type="ECO:0000255" key="1">
    <source>
        <dbReference type="HAMAP-Rule" id="MF_00060"/>
    </source>
</evidence>
<protein>
    <recommendedName>
        <fullName evidence="1">5'-nucleotidase SurE</fullName>
        <ecNumber evidence="1">3.1.3.5</ecNumber>
    </recommendedName>
    <alternativeName>
        <fullName evidence="1">Nucleoside 5'-monophosphate phosphohydrolase</fullName>
    </alternativeName>
</protein>
<dbReference type="EC" id="3.1.3.5" evidence="1"/>
<dbReference type="EMBL" id="BX571661">
    <property type="protein sequence ID" value="CAE10705.1"/>
    <property type="molecule type" value="Genomic_DNA"/>
</dbReference>
<dbReference type="RefSeq" id="WP_011139489.1">
    <property type="nucleotide sequence ID" value="NC_005090.1"/>
</dbReference>
<dbReference type="SMR" id="Q7M8G1"/>
<dbReference type="STRING" id="273121.WS1678"/>
<dbReference type="KEGG" id="wsu:WS1678"/>
<dbReference type="eggNOG" id="COG0496">
    <property type="taxonomic scope" value="Bacteria"/>
</dbReference>
<dbReference type="HOGENOM" id="CLU_045192_1_3_7"/>
<dbReference type="Proteomes" id="UP000000422">
    <property type="component" value="Chromosome"/>
</dbReference>
<dbReference type="GO" id="GO:0005737">
    <property type="term" value="C:cytoplasm"/>
    <property type="evidence" value="ECO:0007669"/>
    <property type="project" value="UniProtKB-SubCell"/>
</dbReference>
<dbReference type="GO" id="GO:0008254">
    <property type="term" value="F:3'-nucleotidase activity"/>
    <property type="evidence" value="ECO:0007669"/>
    <property type="project" value="TreeGrafter"/>
</dbReference>
<dbReference type="GO" id="GO:0008253">
    <property type="term" value="F:5'-nucleotidase activity"/>
    <property type="evidence" value="ECO:0007669"/>
    <property type="project" value="UniProtKB-UniRule"/>
</dbReference>
<dbReference type="GO" id="GO:0004309">
    <property type="term" value="F:exopolyphosphatase activity"/>
    <property type="evidence" value="ECO:0007669"/>
    <property type="project" value="TreeGrafter"/>
</dbReference>
<dbReference type="GO" id="GO:0046872">
    <property type="term" value="F:metal ion binding"/>
    <property type="evidence" value="ECO:0007669"/>
    <property type="project" value="UniProtKB-UniRule"/>
</dbReference>
<dbReference type="GO" id="GO:0000166">
    <property type="term" value="F:nucleotide binding"/>
    <property type="evidence" value="ECO:0007669"/>
    <property type="project" value="UniProtKB-KW"/>
</dbReference>
<dbReference type="FunFam" id="3.40.1210.10:FF:000001">
    <property type="entry name" value="5'/3'-nucleotidase SurE"/>
    <property type="match status" value="1"/>
</dbReference>
<dbReference type="Gene3D" id="3.40.1210.10">
    <property type="entry name" value="Survival protein SurE-like phosphatase/nucleotidase"/>
    <property type="match status" value="1"/>
</dbReference>
<dbReference type="HAMAP" id="MF_00060">
    <property type="entry name" value="SurE"/>
    <property type="match status" value="1"/>
</dbReference>
<dbReference type="InterPro" id="IPR030048">
    <property type="entry name" value="SurE"/>
</dbReference>
<dbReference type="InterPro" id="IPR002828">
    <property type="entry name" value="SurE-like_Pase/nucleotidase"/>
</dbReference>
<dbReference type="InterPro" id="IPR036523">
    <property type="entry name" value="SurE-like_sf"/>
</dbReference>
<dbReference type="NCBIfam" id="NF001490">
    <property type="entry name" value="PRK00346.1-4"/>
    <property type="match status" value="1"/>
</dbReference>
<dbReference type="NCBIfam" id="NF001494">
    <property type="entry name" value="PRK00346.2-4"/>
    <property type="match status" value="1"/>
</dbReference>
<dbReference type="NCBIfam" id="TIGR00087">
    <property type="entry name" value="surE"/>
    <property type="match status" value="1"/>
</dbReference>
<dbReference type="PANTHER" id="PTHR30457">
    <property type="entry name" value="5'-NUCLEOTIDASE SURE"/>
    <property type="match status" value="1"/>
</dbReference>
<dbReference type="PANTHER" id="PTHR30457:SF12">
    <property type="entry name" value="5'_3'-NUCLEOTIDASE SURE"/>
    <property type="match status" value="1"/>
</dbReference>
<dbReference type="Pfam" id="PF01975">
    <property type="entry name" value="SurE"/>
    <property type="match status" value="1"/>
</dbReference>
<dbReference type="SUPFAM" id="SSF64167">
    <property type="entry name" value="SurE-like"/>
    <property type="match status" value="1"/>
</dbReference>
<reference key="1">
    <citation type="journal article" date="2003" name="Proc. Natl. Acad. Sci. U.S.A.">
        <title>Complete genome sequence and analysis of Wolinella succinogenes.</title>
        <authorList>
            <person name="Baar C."/>
            <person name="Eppinger M."/>
            <person name="Raddatz G."/>
            <person name="Simon J."/>
            <person name="Lanz C."/>
            <person name="Klimmek O."/>
            <person name="Nandakumar R."/>
            <person name="Gross R."/>
            <person name="Rosinus A."/>
            <person name="Keller H."/>
            <person name="Jagtap P."/>
            <person name="Linke B."/>
            <person name="Meyer F."/>
            <person name="Lederer H."/>
            <person name="Schuster S.C."/>
        </authorList>
    </citation>
    <scope>NUCLEOTIDE SEQUENCE [LARGE SCALE GENOMIC DNA]</scope>
    <source>
        <strain>ATCC 29543 / DSM 1740 / CCUG 13145 / JCM 31913 / LMG 7466 / NCTC 11488 / FDC 602W</strain>
    </source>
</reference>
<gene>
    <name evidence="1" type="primary">surE</name>
    <name type="ordered locus">WS1678</name>
</gene>
<comment type="function">
    <text evidence="1">Nucleotidase that shows phosphatase activity on nucleoside 5'-monophosphates.</text>
</comment>
<comment type="catalytic activity">
    <reaction evidence="1">
        <text>a ribonucleoside 5'-phosphate + H2O = a ribonucleoside + phosphate</text>
        <dbReference type="Rhea" id="RHEA:12484"/>
        <dbReference type="ChEBI" id="CHEBI:15377"/>
        <dbReference type="ChEBI" id="CHEBI:18254"/>
        <dbReference type="ChEBI" id="CHEBI:43474"/>
        <dbReference type="ChEBI" id="CHEBI:58043"/>
        <dbReference type="EC" id="3.1.3.5"/>
    </reaction>
</comment>
<comment type="cofactor">
    <cofactor evidence="1">
        <name>a divalent metal cation</name>
        <dbReference type="ChEBI" id="CHEBI:60240"/>
    </cofactor>
    <text evidence="1">Binds 1 divalent metal cation per subunit.</text>
</comment>
<comment type="subcellular location">
    <subcellularLocation>
        <location evidence="1">Cytoplasm</location>
    </subcellularLocation>
</comment>
<comment type="similarity">
    <text evidence="1">Belongs to the SurE nucleotidase family.</text>
</comment>
<proteinExistence type="inferred from homology"/>